<feature type="chain" id="PRO_0000254843" description="Cytochrome b">
    <location>
        <begin position="1"/>
        <end position="382"/>
    </location>
</feature>
<feature type="transmembrane region" description="Helical" evidence="2">
    <location>
        <begin position="33"/>
        <end position="53"/>
    </location>
</feature>
<feature type="transmembrane region" description="Helical" evidence="2">
    <location>
        <begin position="77"/>
        <end position="98"/>
    </location>
</feature>
<feature type="transmembrane region" description="Helical" evidence="2">
    <location>
        <begin position="113"/>
        <end position="133"/>
    </location>
</feature>
<feature type="transmembrane region" description="Helical" evidence="2">
    <location>
        <begin position="178"/>
        <end position="198"/>
    </location>
</feature>
<feature type="transmembrane region" description="Helical" evidence="2">
    <location>
        <begin position="226"/>
        <end position="246"/>
    </location>
</feature>
<feature type="transmembrane region" description="Helical" evidence="2">
    <location>
        <begin position="288"/>
        <end position="308"/>
    </location>
</feature>
<feature type="transmembrane region" description="Helical" evidence="2">
    <location>
        <begin position="320"/>
        <end position="340"/>
    </location>
</feature>
<feature type="transmembrane region" description="Helical" evidence="2">
    <location>
        <begin position="347"/>
        <end position="367"/>
    </location>
</feature>
<feature type="binding site" description="axial binding residue" evidence="2">
    <location>
        <position position="83"/>
    </location>
    <ligand>
        <name>heme b</name>
        <dbReference type="ChEBI" id="CHEBI:60344"/>
        <label>b562</label>
    </ligand>
    <ligandPart>
        <name>Fe</name>
        <dbReference type="ChEBI" id="CHEBI:18248"/>
    </ligandPart>
</feature>
<feature type="binding site" description="axial binding residue" evidence="2">
    <location>
        <position position="97"/>
    </location>
    <ligand>
        <name>heme b</name>
        <dbReference type="ChEBI" id="CHEBI:60344"/>
        <label>b566</label>
    </ligand>
    <ligandPart>
        <name>Fe</name>
        <dbReference type="ChEBI" id="CHEBI:18248"/>
    </ligandPart>
</feature>
<feature type="binding site" description="axial binding residue" evidence="2">
    <location>
        <position position="182"/>
    </location>
    <ligand>
        <name>heme b</name>
        <dbReference type="ChEBI" id="CHEBI:60344"/>
        <label>b562</label>
    </ligand>
    <ligandPart>
        <name>Fe</name>
        <dbReference type="ChEBI" id="CHEBI:18248"/>
    </ligandPart>
</feature>
<feature type="binding site" description="axial binding residue" evidence="2">
    <location>
        <position position="196"/>
    </location>
    <ligand>
        <name>heme b</name>
        <dbReference type="ChEBI" id="CHEBI:60344"/>
        <label>b566</label>
    </ligand>
    <ligandPart>
        <name>Fe</name>
        <dbReference type="ChEBI" id="CHEBI:18248"/>
    </ligandPart>
</feature>
<feature type="binding site" evidence="2">
    <location>
        <position position="201"/>
    </location>
    <ligand>
        <name>a ubiquinone</name>
        <dbReference type="ChEBI" id="CHEBI:16389"/>
    </ligand>
</feature>
<reference key="1">
    <citation type="journal article" date="1996" name="J. Mammal. Evol.">
        <title>Relationships among didelphid marsupials based on sequence variation in the mitochondrial cytochrome b gene.</title>
        <authorList>
            <person name="Patton J.L."/>
            <person name="dos Reis Maria S.F."/>
            <person name="da Silva N.F."/>
        </authorList>
    </citation>
    <scope>NUCLEOTIDE SEQUENCE [GENOMIC DNA]</scope>
</reference>
<accession>Q35518</accession>
<name>CYB_PHIMC</name>
<geneLocation type="mitochondrion"/>
<sequence>MTNLRKTHPLMKIINDSFIDLPTPSNISAWWNFGSLLGMCLIIQILTGLFLAMHYTSDTLTAFSSVAHICRDVNYGWLIRNIHANGASMFFVCLFLHVGRGIYYGSYLYKETWNIGVILLLTVMATAFVGYVLPWGQMSFWGATVITNLLSAIPYIGNTLVEWIWGGFSVDKATLTRFFAFHFILPFIILAMVVVHLLFLHETGSSNPTGLNPDSDKIPFHPYYTIKDILGLFLMIIILLSLAMFSPDLLGDPDNFTPANPLNTPPHIKPEWYFLFAYAILRSIPNKLGGVLALLMSILVLLIIPLLHTSTQRSMAFRPISQTLFWMLTANLIILTWIGGQPVEQPYIIIGQWASISYFTIIIILMPLAGMLENYMLKPKFP</sequence>
<keyword id="KW-0249">Electron transport</keyword>
<keyword id="KW-0349">Heme</keyword>
<keyword id="KW-0408">Iron</keyword>
<keyword id="KW-0472">Membrane</keyword>
<keyword id="KW-0479">Metal-binding</keyword>
<keyword id="KW-0496">Mitochondrion</keyword>
<keyword id="KW-0999">Mitochondrion inner membrane</keyword>
<keyword id="KW-0679">Respiratory chain</keyword>
<keyword id="KW-0812">Transmembrane</keyword>
<keyword id="KW-1133">Transmembrane helix</keyword>
<keyword id="KW-0813">Transport</keyword>
<keyword id="KW-0830">Ubiquinone</keyword>
<gene>
    <name type="primary">MT-CYB</name>
    <name type="synonym">COB</name>
    <name type="synonym">CYTB</name>
    <name type="synonym">MTCYB</name>
</gene>
<protein>
    <recommendedName>
        <fullName>Cytochrome b</fullName>
    </recommendedName>
    <alternativeName>
        <fullName>Complex III subunit 3</fullName>
    </alternativeName>
    <alternativeName>
        <fullName>Complex III subunit III</fullName>
    </alternativeName>
    <alternativeName>
        <fullName>Cytochrome b-c1 complex subunit 3</fullName>
    </alternativeName>
    <alternativeName>
        <fullName>Ubiquinol-cytochrome-c reductase complex cytochrome b subunit</fullName>
    </alternativeName>
</protein>
<proteinExistence type="inferred from homology"/>
<dbReference type="EMBL" id="U34680">
    <property type="protein sequence ID" value="AAA99760.1"/>
    <property type="molecule type" value="Genomic_DNA"/>
</dbReference>
<dbReference type="SMR" id="Q35518"/>
<dbReference type="GO" id="GO:0005743">
    <property type="term" value="C:mitochondrial inner membrane"/>
    <property type="evidence" value="ECO:0007669"/>
    <property type="project" value="UniProtKB-SubCell"/>
</dbReference>
<dbReference type="GO" id="GO:0045275">
    <property type="term" value="C:respiratory chain complex III"/>
    <property type="evidence" value="ECO:0007669"/>
    <property type="project" value="InterPro"/>
</dbReference>
<dbReference type="GO" id="GO:0046872">
    <property type="term" value="F:metal ion binding"/>
    <property type="evidence" value="ECO:0007669"/>
    <property type="project" value="UniProtKB-KW"/>
</dbReference>
<dbReference type="GO" id="GO:0008121">
    <property type="term" value="F:ubiquinol-cytochrome-c reductase activity"/>
    <property type="evidence" value="ECO:0007669"/>
    <property type="project" value="InterPro"/>
</dbReference>
<dbReference type="GO" id="GO:0006122">
    <property type="term" value="P:mitochondrial electron transport, ubiquinol to cytochrome c"/>
    <property type="evidence" value="ECO:0007669"/>
    <property type="project" value="TreeGrafter"/>
</dbReference>
<dbReference type="CDD" id="cd00290">
    <property type="entry name" value="cytochrome_b_C"/>
    <property type="match status" value="1"/>
</dbReference>
<dbReference type="CDD" id="cd00284">
    <property type="entry name" value="Cytochrome_b_N"/>
    <property type="match status" value="1"/>
</dbReference>
<dbReference type="FunFam" id="1.20.810.10:FF:000002">
    <property type="entry name" value="Cytochrome b"/>
    <property type="match status" value="1"/>
</dbReference>
<dbReference type="Gene3D" id="1.20.810.10">
    <property type="entry name" value="Cytochrome Bc1 Complex, Chain C"/>
    <property type="match status" value="1"/>
</dbReference>
<dbReference type="InterPro" id="IPR005798">
    <property type="entry name" value="Cyt_b/b6_C"/>
</dbReference>
<dbReference type="InterPro" id="IPR036150">
    <property type="entry name" value="Cyt_b/b6_C_sf"/>
</dbReference>
<dbReference type="InterPro" id="IPR005797">
    <property type="entry name" value="Cyt_b/b6_N"/>
</dbReference>
<dbReference type="InterPro" id="IPR027387">
    <property type="entry name" value="Cytb/b6-like_sf"/>
</dbReference>
<dbReference type="InterPro" id="IPR030689">
    <property type="entry name" value="Cytochrome_b"/>
</dbReference>
<dbReference type="InterPro" id="IPR048260">
    <property type="entry name" value="Cytochrome_b_C_euk/bac"/>
</dbReference>
<dbReference type="InterPro" id="IPR048259">
    <property type="entry name" value="Cytochrome_b_N_euk/bac"/>
</dbReference>
<dbReference type="InterPro" id="IPR016174">
    <property type="entry name" value="Di-haem_cyt_TM"/>
</dbReference>
<dbReference type="PANTHER" id="PTHR19271">
    <property type="entry name" value="CYTOCHROME B"/>
    <property type="match status" value="1"/>
</dbReference>
<dbReference type="PANTHER" id="PTHR19271:SF16">
    <property type="entry name" value="CYTOCHROME B"/>
    <property type="match status" value="1"/>
</dbReference>
<dbReference type="Pfam" id="PF00032">
    <property type="entry name" value="Cytochrom_B_C"/>
    <property type="match status" value="1"/>
</dbReference>
<dbReference type="Pfam" id="PF00033">
    <property type="entry name" value="Cytochrome_B"/>
    <property type="match status" value="1"/>
</dbReference>
<dbReference type="PIRSF" id="PIRSF038885">
    <property type="entry name" value="COB"/>
    <property type="match status" value="1"/>
</dbReference>
<dbReference type="SUPFAM" id="SSF81648">
    <property type="entry name" value="a domain/subunit of cytochrome bc1 complex (Ubiquinol-cytochrome c reductase)"/>
    <property type="match status" value="1"/>
</dbReference>
<dbReference type="SUPFAM" id="SSF81342">
    <property type="entry name" value="Transmembrane di-heme cytochromes"/>
    <property type="match status" value="1"/>
</dbReference>
<dbReference type="PROSITE" id="PS51003">
    <property type="entry name" value="CYTB_CTER"/>
    <property type="match status" value="1"/>
</dbReference>
<dbReference type="PROSITE" id="PS51002">
    <property type="entry name" value="CYTB_NTER"/>
    <property type="match status" value="1"/>
</dbReference>
<comment type="function">
    <text evidence="2">Component of the ubiquinol-cytochrome c reductase complex (complex III or cytochrome b-c1 complex) that is part of the mitochondrial respiratory chain. The b-c1 complex mediates electron transfer from ubiquinol to cytochrome c. Contributes to the generation of a proton gradient across the mitochondrial membrane that is then used for ATP synthesis.</text>
</comment>
<comment type="cofactor">
    <cofactor evidence="2">
        <name>heme b</name>
        <dbReference type="ChEBI" id="CHEBI:60344"/>
    </cofactor>
    <text evidence="2">Binds 2 heme b groups non-covalently.</text>
</comment>
<comment type="subunit">
    <text evidence="2">The cytochrome bc1 complex contains 11 subunits: 3 respiratory subunits (MT-CYB, CYC1 and UQCRFS1), 2 core proteins (UQCRC1 and UQCRC2) and 6 low-molecular weight proteins (UQCRH/QCR6, UQCRB/QCR7, UQCRQ/QCR8, UQCR10/QCR9, UQCR11/QCR10 and a cleavage product of UQCRFS1). This cytochrome bc1 complex then forms a dimer.</text>
</comment>
<comment type="subcellular location">
    <subcellularLocation>
        <location evidence="2">Mitochondrion inner membrane</location>
        <topology evidence="2">Multi-pass membrane protein</topology>
    </subcellularLocation>
</comment>
<comment type="miscellaneous">
    <text evidence="1">Heme 1 (or BL or b562) is low-potential and absorbs at about 562 nm, and heme 2 (or BH or b566) is high-potential and absorbs at about 566 nm.</text>
</comment>
<comment type="similarity">
    <text evidence="3 4">Belongs to the cytochrome b family.</text>
</comment>
<comment type="caution">
    <text evidence="2">The full-length protein contains only eight transmembrane helices, not nine as predicted by bioinformatics tools.</text>
</comment>
<evidence type="ECO:0000250" key="1"/>
<evidence type="ECO:0000250" key="2">
    <source>
        <dbReference type="UniProtKB" id="P00157"/>
    </source>
</evidence>
<evidence type="ECO:0000255" key="3">
    <source>
        <dbReference type="PROSITE-ProRule" id="PRU00967"/>
    </source>
</evidence>
<evidence type="ECO:0000255" key="4">
    <source>
        <dbReference type="PROSITE-ProRule" id="PRU00968"/>
    </source>
</evidence>
<organism>
    <name type="scientific">Philander mcilhennyi</name>
    <name type="common">Mcilhenny's four-eyed opossum</name>
    <dbReference type="NCBI Taxonomy" id="42729"/>
    <lineage>
        <taxon>Eukaryota</taxon>
        <taxon>Metazoa</taxon>
        <taxon>Chordata</taxon>
        <taxon>Craniata</taxon>
        <taxon>Vertebrata</taxon>
        <taxon>Euteleostomi</taxon>
        <taxon>Mammalia</taxon>
        <taxon>Metatheria</taxon>
        <taxon>Didelphimorphia</taxon>
        <taxon>Didelphidae</taxon>
        <taxon>Philander</taxon>
    </lineage>
</organism>